<feature type="propeptide" id="PRO_0000031215" evidence="1">
    <location>
        <begin position="1"/>
        <end position="2"/>
    </location>
</feature>
<feature type="chain" id="PRO_0000031216" description="Ribulose bisphosphate carboxylase large chain">
    <location>
        <begin position="3"/>
        <end position="58" status="greater than"/>
    </location>
</feature>
<feature type="modified residue" description="N-acetylproline" evidence="1">
    <location>
        <position position="3"/>
    </location>
</feature>
<feature type="modified residue" description="N6,N6,N6-trimethyllysine" evidence="1">
    <location>
        <position position="14"/>
    </location>
</feature>
<feature type="non-terminal residue">
    <location>
        <position position="58"/>
    </location>
</feature>
<dbReference type="EC" id="4.1.1.39"/>
<dbReference type="EMBL" id="X69735">
    <property type="protein sequence ID" value="CAA49390.1"/>
    <property type="molecule type" value="Genomic_DNA"/>
</dbReference>
<dbReference type="PIR" id="S31548">
    <property type="entry name" value="S31548"/>
</dbReference>
<dbReference type="SMR" id="P69567"/>
<dbReference type="GO" id="GO:0009507">
    <property type="term" value="C:chloroplast"/>
    <property type="evidence" value="ECO:0007669"/>
    <property type="project" value="UniProtKB-SubCell"/>
</dbReference>
<dbReference type="GO" id="GO:0004497">
    <property type="term" value="F:monooxygenase activity"/>
    <property type="evidence" value="ECO:0007669"/>
    <property type="project" value="UniProtKB-KW"/>
</dbReference>
<dbReference type="GO" id="GO:0016984">
    <property type="term" value="F:ribulose-bisphosphate carboxylase activity"/>
    <property type="evidence" value="ECO:0007669"/>
    <property type="project" value="UniProtKB-EC"/>
</dbReference>
<dbReference type="GO" id="GO:0009853">
    <property type="term" value="P:photorespiration"/>
    <property type="evidence" value="ECO:0007669"/>
    <property type="project" value="UniProtKB-KW"/>
</dbReference>
<dbReference type="GO" id="GO:0019253">
    <property type="term" value="P:reductive pentose-phosphate cycle"/>
    <property type="evidence" value="ECO:0007669"/>
    <property type="project" value="UniProtKB-KW"/>
</dbReference>
<dbReference type="Gene3D" id="3.30.70.150">
    <property type="entry name" value="RuBisCO large subunit, N-terminal domain"/>
    <property type="match status" value="1"/>
</dbReference>
<dbReference type="InterPro" id="IPR033966">
    <property type="entry name" value="RuBisCO"/>
</dbReference>
<dbReference type="InterPro" id="IPR017443">
    <property type="entry name" value="RuBisCO_lsu_fd_N"/>
</dbReference>
<dbReference type="InterPro" id="IPR036422">
    <property type="entry name" value="RuBisCO_lsu_N_sf"/>
</dbReference>
<dbReference type="PANTHER" id="PTHR42704">
    <property type="entry name" value="RIBULOSE BISPHOSPHATE CARBOXYLASE"/>
    <property type="match status" value="1"/>
</dbReference>
<dbReference type="PANTHER" id="PTHR42704:SF15">
    <property type="entry name" value="RIBULOSE BISPHOSPHATE CARBOXYLASE LARGE CHAIN"/>
    <property type="match status" value="1"/>
</dbReference>
<dbReference type="Pfam" id="PF02788">
    <property type="entry name" value="RuBisCO_large_N"/>
    <property type="match status" value="1"/>
</dbReference>
<dbReference type="SUPFAM" id="SSF54966">
    <property type="entry name" value="RuBisCO, large subunit, small (N-terminal) domain"/>
    <property type="match status" value="1"/>
</dbReference>
<evidence type="ECO:0000250" key="1"/>
<evidence type="ECO:0000305" key="2"/>
<sequence length="58" mass="6237">MSPQTETKASVGFKAGVKDYKLTYYTPEYETKDTDILAAFRVTPQPGVPPEEAGAAVA</sequence>
<proteinExistence type="inferred from homology"/>
<protein>
    <recommendedName>
        <fullName>Ribulose bisphosphate carboxylase large chain</fullName>
        <shortName>RuBisCO large subunit</shortName>
        <ecNumber>4.1.1.39</ecNumber>
    </recommendedName>
</protein>
<accession>P69567</accession>
<accession>P31187</accession>
<comment type="function">
    <text evidence="1">RuBisCO catalyzes two reactions: the carboxylation of D-ribulose 1,5-bisphosphate, the primary event in carbon dioxide fixation, as well as the oxidative fragmentation of the pentose substrate in the photorespiration process. Both reactions occur simultaneously and in competition at the same active site (By similarity).</text>
</comment>
<comment type="catalytic activity">
    <reaction>
        <text>2 (2R)-3-phosphoglycerate + 2 H(+) = D-ribulose 1,5-bisphosphate + CO2 + H2O</text>
        <dbReference type="Rhea" id="RHEA:23124"/>
        <dbReference type="ChEBI" id="CHEBI:15377"/>
        <dbReference type="ChEBI" id="CHEBI:15378"/>
        <dbReference type="ChEBI" id="CHEBI:16526"/>
        <dbReference type="ChEBI" id="CHEBI:57870"/>
        <dbReference type="ChEBI" id="CHEBI:58272"/>
        <dbReference type="EC" id="4.1.1.39"/>
    </reaction>
</comment>
<comment type="catalytic activity">
    <reaction>
        <text>D-ribulose 1,5-bisphosphate + O2 = 2-phosphoglycolate + (2R)-3-phosphoglycerate + 2 H(+)</text>
        <dbReference type="Rhea" id="RHEA:36631"/>
        <dbReference type="ChEBI" id="CHEBI:15378"/>
        <dbReference type="ChEBI" id="CHEBI:15379"/>
        <dbReference type="ChEBI" id="CHEBI:57870"/>
        <dbReference type="ChEBI" id="CHEBI:58033"/>
        <dbReference type="ChEBI" id="CHEBI:58272"/>
    </reaction>
</comment>
<comment type="subunit">
    <text evidence="1">Heterohexadecamer of 8 large chains and 8 small chains.</text>
</comment>
<comment type="subcellular location">
    <subcellularLocation>
        <location>Plastid</location>
        <location>Chloroplast</location>
    </subcellularLocation>
</comment>
<comment type="miscellaneous">
    <text evidence="1">The basic functional RuBisCO is composed of a large chain homodimer in a 'head-to-tail' conformation. In form I RuBisCO this homodimer is arranged in a barrel-like tetramer with the small subunits forming a tetrameric 'cap' on each end of the 'barrel' (By similarity).</text>
</comment>
<comment type="similarity">
    <text evidence="2">Belongs to the RuBisCO large chain family. Type I subfamily.</text>
</comment>
<name>RBL_EUPCH</name>
<gene>
    <name type="primary">rbcL</name>
</gene>
<geneLocation type="chloroplast"/>
<organism>
    <name type="scientific">Euphorbia characias</name>
    <name type="common">Albanian spurge</name>
    <dbReference type="NCBI Taxonomy" id="3991"/>
    <lineage>
        <taxon>Eukaryota</taxon>
        <taxon>Viridiplantae</taxon>
        <taxon>Streptophyta</taxon>
        <taxon>Embryophyta</taxon>
        <taxon>Tracheophyta</taxon>
        <taxon>Spermatophyta</taxon>
        <taxon>Magnoliopsida</taxon>
        <taxon>eudicotyledons</taxon>
        <taxon>Gunneridae</taxon>
        <taxon>Pentapetalae</taxon>
        <taxon>rosids</taxon>
        <taxon>fabids</taxon>
        <taxon>Malpighiales</taxon>
        <taxon>Euphorbiaceae</taxon>
        <taxon>Euphorbioideae</taxon>
        <taxon>Euphorbieae</taxon>
        <taxon>Euphorbia</taxon>
        <taxon>Euphorbia subgen. Esula</taxon>
        <taxon>Euphorbia sect. Patellares</taxon>
    </lineage>
</organism>
<reference key="1">
    <citation type="journal article" date="1994" name="Mol. Phylogenet. Evol.">
        <title>Molecular phylogeny of families related to Celastrales based on rbcL 5' flanking sequences.</title>
        <authorList>
            <person name="Savolainen V."/>
            <person name="Manen J.F."/>
            <person name="Douzery E.J.P."/>
            <person name="Spichiger R."/>
        </authorList>
    </citation>
    <scope>NUCLEOTIDE SEQUENCE [GENOMIC DNA]</scope>
</reference>
<keyword id="KW-0007">Acetylation</keyword>
<keyword id="KW-0113">Calvin cycle</keyword>
<keyword id="KW-0120">Carbon dioxide fixation</keyword>
<keyword id="KW-0150">Chloroplast</keyword>
<keyword id="KW-0456">Lyase</keyword>
<keyword id="KW-0488">Methylation</keyword>
<keyword id="KW-0503">Monooxygenase</keyword>
<keyword id="KW-0560">Oxidoreductase</keyword>
<keyword id="KW-0601">Photorespiration</keyword>
<keyword id="KW-0602">Photosynthesis</keyword>
<keyword id="KW-0934">Plastid</keyword>